<proteinExistence type="inferred from homology"/>
<evidence type="ECO:0000250" key="1"/>
<evidence type="ECO:0000255" key="2">
    <source>
        <dbReference type="HAMAP-Rule" id="MF_01057"/>
    </source>
</evidence>
<feature type="chain" id="PRO_0000171363" description="tRNA (guanine-N(7)-)-methyltransferase">
    <location>
        <begin position="1"/>
        <end position="238"/>
    </location>
</feature>
<feature type="active site" evidence="1">
    <location>
        <position position="145"/>
    </location>
</feature>
<feature type="binding site" evidence="2">
    <location>
        <position position="70"/>
    </location>
    <ligand>
        <name>S-adenosyl-L-methionine</name>
        <dbReference type="ChEBI" id="CHEBI:59789"/>
    </ligand>
</feature>
<feature type="binding site" evidence="2">
    <location>
        <position position="95"/>
    </location>
    <ligand>
        <name>S-adenosyl-L-methionine</name>
        <dbReference type="ChEBI" id="CHEBI:59789"/>
    </ligand>
</feature>
<feature type="binding site" evidence="2">
    <location>
        <position position="122"/>
    </location>
    <ligand>
        <name>S-adenosyl-L-methionine</name>
        <dbReference type="ChEBI" id="CHEBI:59789"/>
    </ligand>
</feature>
<feature type="binding site" evidence="2">
    <location>
        <position position="145"/>
    </location>
    <ligand>
        <name>S-adenosyl-L-methionine</name>
        <dbReference type="ChEBI" id="CHEBI:59789"/>
    </ligand>
</feature>
<feature type="binding site" evidence="2">
    <location>
        <position position="149"/>
    </location>
    <ligand>
        <name>substrate</name>
    </ligand>
</feature>
<feature type="binding site" evidence="2">
    <location>
        <position position="181"/>
    </location>
    <ligand>
        <name>substrate</name>
    </ligand>
</feature>
<feature type="binding site" evidence="2">
    <location>
        <begin position="216"/>
        <end position="219"/>
    </location>
    <ligand>
        <name>substrate</name>
    </ligand>
</feature>
<dbReference type="EC" id="2.1.1.33" evidence="2"/>
<dbReference type="EMBL" id="AE002098">
    <property type="protein sequence ID" value="AAF41703.1"/>
    <property type="molecule type" value="Genomic_DNA"/>
</dbReference>
<dbReference type="PIR" id="C81095">
    <property type="entry name" value="C81095"/>
</dbReference>
<dbReference type="RefSeq" id="NP_274347.1">
    <property type="nucleotide sequence ID" value="NC_003112.2"/>
</dbReference>
<dbReference type="RefSeq" id="WP_002222361.1">
    <property type="nucleotide sequence ID" value="NC_003112.2"/>
</dbReference>
<dbReference type="SMR" id="Q9JZ24"/>
<dbReference type="FunCoup" id="Q9JZ24">
    <property type="interactions" value="301"/>
</dbReference>
<dbReference type="STRING" id="122586.NMB1328"/>
<dbReference type="PaxDb" id="122586-NMB1328"/>
<dbReference type="KEGG" id="nme:NMB1328"/>
<dbReference type="PATRIC" id="fig|122586.8.peg.1667"/>
<dbReference type="HOGENOM" id="CLU_050910_0_1_4"/>
<dbReference type="InParanoid" id="Q9JZ24"/>
<dbReference type="OrthoDB" id="9802090at2"/>
<dbReference type="UniPathway" id="UPA00989"/>
<dbReference type="Proteomes" id="UP000000425">
    <property type="component" value="Chromosome"/>
</dbReference>
<dbReference type="GO" id="GO:0043527">
    <property type="term" value="C:tRNA methyltransferase complex"/>
    <property type="evidence" value="ECO:0000318"/>
    <property type="project" value="GO_Central"/>
</dbReference>
<dbReference type="GO" id="GO:0008176">
    <property type="term" value="F:tRNA (guanine(46)-N7)-methyltransferase activity"/>
    <property type="evidence" value="ECO:0000318"/>
    <property type="project" value="GO_Central"/>
</dbReference>
<dbReference type="GO" id="GO:0036265">
    <property type="term" value="P:RNA (guanine-N7)-methylation"/>
    <property type="evidence" value="ECO:0000318"/>
    <property type="project" value="GO_Central"/>
</dbReference>
<dbReference type="GO" id="GO:0030488">
    <property type="term" value="P:tRNA methylation"/>
    <property type="evidence" value="ECO:0000318"/>
    <property type="project" value="GO_Central"/>
</dbReference>
<dbReference type="CDD" id="cd02440">
    <property type="entry name" value="AdoMet_MTases"/>
    <property type="match status" value="1"/>
</dbReference>
<dbReference type="FunFam" id="3.40.50.150:FF:000035">
    <property type="entry name" value="tRNA (guanine-N(7)-)-methyltransferase"/>
    <property type="match status" value="1"/>
</dbReference>
<dbReference type="Gene3D" id="3.40.50.150">
    <property type="entry name" value="Vaccinia Virus protein VP39"/>
    <property type="match status" value="1"/>
</dbReference>
<dbReference type="HAMAP" id="MF_01057">
    <property type="entry name" value="tRNA_methyltr_TrmB"/>
    <property type="match status" value="1"/>
</dbReference>
<dbReference type="InterPro" id="IPR029063">
    <property type="entry name" value="SAM-dependent_MTases_sf"/>
</dbReference>
<dbReference type="InterPro" id="IPR003358">
    <property type="entry name" value="tRNA_(Gua-N-7)_MeTrfase_Trmb"/>
</dbReference>
<dbReference type="InterPro" id="IPR055361">
    <property type="entry name" value="tRNA_methyltr_TrmB_bact"/>
</dbReference>
<dbReference type="NCBIfam" id="TIGR00091">
    <property type="entry name" value="tRNA (guanosine(46)-N7)-methyltransferase TrmB"/>
    <property type="match status" value="1"/>
</dbReference>
<dbReference type="PANTHER" id="PTHR23417">
    <property type="entry name" value="3-DEOXY-D-MANNO-OCTULOSONIC-ACID TRANSFERASE/TRNA GUANINE-N 7 - -METHYLTRANSFERASE"/>
    <property type="match status" value="1"/>
</dbReference>
<dbReference type="PANTHER" id="PTHR23417:SF14">
    <property type="entry name" value="PENTACOTRIPEPTIDE-REPEAT REGION OF PRORP DOMAIN-CONTAINING PROTEIN"/>
    <property type="match status" value="1"/>
</dbReference>
<dbReference type="Pfam" id="PF02390">
    <property type="entry name" value="Methyltransf_4"/>
    <property type="match status" value="1"/>
</dbReference>
<dbReference type="SUPFAM" id="SSF53335">
    <property type="entry name" value="S-adenosyl-L-methionine-dependent methyltransferases"/>
    <property type="match status" value="1"/>
</dbReference>
<dbReference type="PROSITE" id="PS51625">
    <property type="entry name" value="SAM_MT_TRMB"/>
    <property type="match status" value="1"/>
</dbReference>
<reference key="1">
    <citation type="journal article" date="2000" name="Science">
        <title>Complete genome sequence of Neisseria meningitidis serogroup B strain MC58.</title>
        <authorList>
            <person name="Tettelin H."/>
            <person name="Saunders N.J."/>
            <person name="Heidelberg J.F."/>
            <person name="Jeffries A.C."/>
            <person name="Nelson K.E."/>
            <person name="Eisen J.A."/>
            <person name="Ketchum K.A."/>
            <person name="Hood D.W."/>
            <person name="Peden J.F."/>
            <person name="Dodson R.J."/>
            <person name="Nelson W.C."/>
            <person name="Gwinn M.L."/>
            <person name="DeBoy R.T."/>
            <person name="Peterson J.D."/>
            <person name="Hickey E.K."/>
            <person name="Haft D.H."/>
            <person name="Salzberg S.L."/>
            <person name="White O."/>
            <person name="Fleischmann R.D."/>
            <person name="Dougherty B.A."/>
            <person name="Mason T.M."/>
            <person name="Ciecko A."/>
            <person name="Parksey D.S."/>
            <person name="Blair E."/>
            <person name="Cittone H."/>
            <person name="Clark E.B."/>
            <person name="Cotton M.D."/>
            <person name="Utterback T.R."/>
            <person name="Khouri H.M."/>
            <person name="Qin H."/>
            <person name="Vamathevan J.J."/>
            <person name="Gill J."/>
            <person name="Scarlato V."/>
            <person name="Masignani V."/>
            <person name="Pizza M."/>
            <person name="Grandi G."/>
            <person name="Sun L."/>
            <person name="Smith H.O."/>
            <person name="Fraser C.M."/>
            <person name="Moxon E.R."/>
            <person name="Rappuoli R."/>
            <person name="Venter J.C."/>
        </authorList>
    </citation>
    <scope>NUCLEOTIDE SEQUENCE [LARGE SCALE GENOMIC DNA]</scope>
    <source>
        <strain>ATCC BAA-335 / MC58</strain>
    </source>
</reference>
<keyword id="KW-0489">Methyltransferase</keyword>
<keyword id="KW-1185">Reference proteome</keyword>
<keyword id="KW-0949">S-adenosyl-L-methionine</keyword>
<keyword id="KW-0808">Transferase</keyword>
<keyword id="KW-0819">tRNA processing</keyword>
<protein>
    <recommendedName>
        <fullName evidence="2">tRNA (guanine-N(7)-)-methyltransferase</fullName>
        <ecNumber evidence="2">2.1.1.33</ecNumber>
    </recommendedName>
    <alternativeName>
        <fullName evidence="2">tRNA (guanine(46)-N(7))-methyltransferase</fullName>
    </alternativeName>
    <alternativeName>
        <fullName evidence="2">tRNA(m7G46)-methyltransferase</fullName>
    </alternativeName>
</protein>
<gene>
    <name evidence="2" type="primary">trmB</name>
    <name type="ordered locus">NMB1328</name>
</gene>
<sequence length="238" mass="27038">MTDTAENQTQNNWQAGHPRSIRSFVLRQSHMTAAQQRAIDTLWDSFGIDYQATPADLDARFGSSRPKILEIGFGMGTATAEIARRLPETDFLAIDVHGPGVGNLLKLIDENHLENIRVMRHDAVEVVENMLQDGSLDGIHIFFPDPWHKKRHHKRRLIQAPFIAKLLPKLKTGGYIHLATDWEEYAQQMLEVLSSFDSLQNTAADYAPTPDYRPETKFEARGKRLGHGVWDLVFKRIG</sequence>
<organism>
    <name type="scientific">Neisseria meningitidis serogroup B (strain ATCC BAA-335 / MC58)</name>
    <dbReference type="NCBI Taxonomy" id="122586"/>
    <lineage>
        <taxon>Bacteria</taxon>
        <taxon>Pseudomonadati</taxon>
        <taxon>Pseudomonadota</taxon>
        <taxon>Betaproteobacteria</taxon>
        <taxon>Neisseriales</taxon>
        <taxon>Neisseriaceae</taxon>
        <taxon>Neisseria</taxon>
    </lineage>
</organism>
<comment type="function">
    <text evidence="2">Catalyzes the formation of N(7)-methylguanine at position 46 (m7G46) in tRNA.</text>
</comment>
<comment type="catalytic activity">
    <reaction evidence="2">
        <text>guanosine(46) in tRNA + S-adenosyl-L-methionine = N(7)-methylguanosine(46) in tRNA + S-adenosyl-L-homocysteine</text>
        <dbReference type="Rhea" id="RHEA:42708"/>
        <dbReference type="Rhea" id="RHEA-COMP:10188"/>
        <dbReference type="Rhea" id="RHEA-COMP:10189"/>
        <dbReference type="ChEBI" id="CHEBI:57856"/>
        <dbReference type="ChEBI" id="CHEBI:59789"/>
        <dbReference type="ChEBI" id="CHEBI:74269"/>
        <dbReference type="ChEBI" id="CHEBI:74480"/>
        <dbReference type="EC" id="2.1.1.33"/>
    </reaction>
</comment>
<comment type="pathway">
    <text evidence="2">tRNA modification; N(7)-methylguanine-tRNA biosynthesis.</text>
</comment>
<comment type="similarity">
    <text evidence="2">Belongs to the class I-like SAM-binding methyltransferase superfamily. TrmB family.</text>
</comment>
<name>TRMB_NEIMB</name>
<accession>Q9JZ24</accession>